<feature type="chain" id="PRO_0000055691" description="Protein kinase C gamma type">
    <location>
        <begin position="1"/>
        <end position="697"/>
    </location>
</feature>
<feature type="domain" description="C2" evidence="6">
    <location>
        <begin position="157"/>
        <end position="275"/>
    </location>
</feature>
<feature type="domain" description="Protein kinase" evidence="7">
    <location>
        <begin position="351"/>
        <end position="614"/>
    </location>
</feature>
<feature type="domain" description="AGC-kinase C-terminal" evidence="9">
    <location>
        <begin position="615"/>
        <end position="685"/>
    </location>
</feature>
<feature type="zinc finger region" description="Phorbol-ester/DAG-type 1" evidence="8">
    <location>
        <begin position="35"/>
        <end position="85"/>
    </location>
</feature>
<feature type="zinc finger region" description="Phorbol-ester/DAG-type 2" evidence="8">
    <location>
        <begin position="100"/>
        <end position="150"/>
    </location>
</feature>
<feature type="active site" description="Proton acceptor" evidence="7 10">
    <location>
        <position position="480"/>
    </location>
</feature>
<feature type="binding site" evidence="3">
    <location>
        <position position="186"/>
    </location>
    <ligand>
        <name>Ca(2+)</name>
        <dbReference type="ChEBI" id="CHEBI:29108"/>
        <label>1</label>
    </ligand>
</feature>
<feature type="binding site" evidence="2">
    <location>
        <position position="187"/>
    </location>
    <ligand>
        <name>Ca(2+)</name>
        <dbReference type="ChEBI" id="CHEBI:29108"/>
        <label>1</label>
    </ligand>
</feature>
<feature type="binding site" evidence="2">
    <location>
        <position position="187"/>
    </location>
    <ligand>
        <name>Ca(2+)</name>
        <dbReference type="ChEBI" id="CHEBI:29108"/>
        <label>2</label>
    </ligand>
</feature>
<feature type="binding site" evidence="2">
    <location>
        <position position="193"/>
    </location>
    <ligand>
        <name>Ca(2+)</name>
        <dbReference type="ChEBI" id="CHEBI:29108"/>
        <label>2</label>
    </ligand>
</feature>
<feature type="binding site" evidence="2">
    <location>
        <position position="246"/>
    </location>
    <ligand>
        <name>Ca(2+)</name>
        <dbReference type="ChEBI" id="CHEBI:29108"/>
        <label>1</label>
    </ligand>
</feature>
<feature type="binding site" evidence="2">
    <location>
        <position position="246"/>
    </location>
    <ligand>
        <name>Ca(2+)</name>
        <dbReference type="ChEBI" id="CHEBI:29108"/>
        <label>2</label>
    </ligand>
</feature>
<feature type="binding site" evidence="2">
    <location>
        <position position="247"/>
    </location>
    <ligand>
        <name>Ca(2+)</name>
        <dbReference type="ChEBI" id="CHEBI:29108"/>
        <label>2</label>
    </ligand>
</feature>
<feature type="binding site" evidence="2">
    <location>
        <position position="248"/>
    </location>
    <ligand>
        <name>Ca(2+)</name>
        <dbReference type="ChEBI" id="CHEBI:29108"/>
        <label>1</label>
    </ligand>
</feature>
<feature type="binding site" evidence="2">
    <location>
        <position position="248"/>
    </location>
    <ligand>
        <name>Ca(2+)</name>
        <dbReference type="ChEBI" id="CHEBI:29108"/>
        <label>2</label>
    </ligand>
</feature>
<feature type="binding site" evidence="2">
    <location>
        <position position="248"/>
    </location>
    <ligand>
        <name>Ca(2+)</name>
        <dbReference type="ChEBI" id="CHEBI:29108"/>
        <label>3</label>
    </ligand>
</feature>
<feature type="binding site" evidence="2">
    <location>
        <position position="251"/>
    </location>
    <ligand>
        <name>Ca(2+)</name>
        <dbReference type="ChEBI" id="CHEBI:29108"/>
        <label>3</label>
    </ligand>
</feature>
<feature type="binding site" evidence="2">
    <location>
        <position position="252"/>
    </location>
    <ligand>
        <name>Ca(2+)</name>
        <dbReference type="ChEBI" id="CHEBI:29108"/>
        <label>3</label>
    </ligand>
</feature>
<feature type="binding site" evidence="2">
    <location>
        <position position="254"/>
    </location>
    <ligand>
        <name>Ca(2+)</name>
        <dbReference type="ChEBI" id="CHEBI:29108"/>
        <label>1</label>
    </ligand>
</feature>
<feature type="binding site" evidence="2">
    <location>
        <position position="254"/>
    </location>
    <ligand>
        <name>Ca(2+)</name>
        <dbReference type="ChEBI" id="CHEBI:29108"/>
        <label>3</label>
    </ligand>
</feature>
<feature type="binding site" evidence="7">
    <location>
        <begin position="357"/>
        <end position="365"/>
    </location>
    <ligand>
        <name>ATP</name>
        <dbReference type="ChEBI" id="CHEBI:30616"/>
    </ligand>
</feature>
<feature type="binding site" evidence="7">
    <location>
        <position position="380"/>
    </location>
    <ligand>
        <name>ATP</name>
        <dbReference type="ChEBI" id="CHEBI:30616"/>
    </ligand>
</feature>
<feature type="modified residue" description="Phosphothreonine; by autocatalysis" evidence="1">
    <location>
        <position position="250"/>
    </location>
</feature>
<feature type="modified residue" description="Phosphoserine" evidence="3">
    <location>
        <position position="320"/>
    </location>
</feature>
<feature type="modified residue" description="Phosphoserine" evidence="3">
    <location>
        <position position="322"/>
    </location>
</feature>
<feature type="modified residue" description="Phosphoserine" evidence="3">
    <location>
        <position position="326"/>
    </location>
</feature>
<feature type="modified residue" description="Phosphoserine" evidence="3">
    <location>
        <position position="328"/>
    </location>
</feature>
<feature type="modified residue" description="Phosphoserine" evidence="3">
    <location>
        <position position="330"/>
    </location>
</feature>
<feature type="modified residue" description="Phosphothreonine" evidence="3">
    <location>
        <position position="332"/>
    </location>
</feature>
<feature type="modified residue" description="Phosphoserine" evidence="3">
    <location>
        <position position="373"/>
    </location>
</feature>
<feature type="modified residue" description="Phosphothreonine; by PDPK1" evidence="3">
    <location>
        <position position="514"/>
    </location>
</feature>
<feature type="modified residue" description="Phosphothreonine; by autocatalysis" evidence="1">
    <location>
        <position position="648"/>
    </location>
</feature>
<feature type="modified residue" description="Phosphothreonine; by autocatalysis" evidence="3 5">
    <location>
        <position position="655"/>
    </location>
</feature>
<feature type="modified residue" description="Phosphothreonine; by autocatalysis" evidence="3">
    <location>
        <position position="674"/>
    </location>
</feature>
<feature type="modified residue" description="Phosphotyrosine; by SYK" evidence="1">
    <location>
        <position position="675"/>
    </location>
</feature>
<feature type="modified residue" description="Phosphoserine" evidence="4">
    <location>
        <position position="687"/>
    </location>
</feature>
<keyword id="KW-0067">ATP-binding</keyword>
<keyword id="KW-0090">Biological rhythms</keyword>
<keyword id="KW-0106">Calcium</keyword>
<keyword id="KW-1003">Cell membrane</keyword>
<keyword id="KW-0966">Cell projection</keyword>
<keyword id="KW-0963">Cytoplasm</keyword>
<keyword id="KW-0418">Kinase</keyword>
<keyword id="KW-0472">Membrane</keyword>
<keyword id="KW-0479">Metal-binding</keyword>
<keyword id="KW-0547">Nucleotide-binding</keyword>
<keyword id="KW-0597">Phosphoprotein</keyword>
<keyword id="KW-1185">Reference proteome</keyword>
<keyword id="KW-0677">Repeat</keyword>
<keyword id="KW-0723">Serine/threonine-protein kinase</keyword>
<keyword id="KW-0770">Synapse</keyword>
<keyword id="KW-0771">Synaptosome</keyword>
<keyword id="KW-0808">Transferase</keyword>
<keyword id="KW-0832">Ubl conjugation</keyword>
<keyword id="KW-0862">Zinc</keyword>
<keyword id="KW-0863">Zinc-finger</keyword>
<comment type="function">
    <text evidence="2 3 4 11">Calcium-activated, phospholipid- and diacylglycerol (DAG)-dependent serine/threonine-protein kinase that plays diverse roles in neuronal cells and eye tissues, such as regulation of the neuronal receptors GRIA4/GLUR4 and GRIN1/NMDAR1, modulation of receptors and neuronal functions related to sensitivity to opiates, pain and alcohol, mediation of synaptic function and cell survival after ischemia, and inhibition of gap junction activity after oxidative stress. Binds and phosphorylates GRIA4/GLUR4 glutamate receptor and regulates its function by increasing plasma membrane-associated GRIA4 expression. In primary cerebellar neurons treated with the agonist 3,5-dihyidroxyphenylglycine, functions downstream of the metabotropic glutamate receptor GRM5/MGLUR5 and phosphorylates GRIN1/NMDAR1 receptor which plays a key role in synaptic plasticity, synaptogenesis, excitotoxicity, memory acquisition and learning. May be involved in the regulation of hippocampal long-term potentiation (LTP), but may be not necessary for the process of synaptic plasticity. May be involved in desensitization of mu-type opioid receptor-mediated G-protein activation in the spinal cord, and may be critical for the development and/or maintenance of morphine-induced reinforcing effects in the limbic forebrain. May modulate the functionality of mu-type-opioid receptors by participating in a signaling pathway which leads to the phosphorylation and degradation of opioid receptors. May also contributes to chronic morphine-induced changes in nociceptive processing. Plays a role in neuropathic pain mechanisms and contributes to the maintenance of the allodynia pain produced by peripheral inflammation. Plays an important role in initial sensitivity and tolerance to ethanol, by mediating the behavioral effects of ethanol as well as the effects of this drug on the GABA(A) receptors. During and after cerebral ischemia modulate neurotransmission and cell survival in synaptic membranes, and is involved in insulin-induced inhibition of necrosis, an important mechanism for minimizing ischemic injury. Required for the elimination of multiple climbing fibers during innervation of Purkinje cells in developing cerebellum (By similarity). Is activated in lens epithelial cells upon hydrogen peroxide treatment, and phosphorylates connexin-43 (GJA1/CX43), resulting in disassembly of GJA1 gap junction plaques and inhibition of gap junction activity which could provide a protective effect against oxidative stress. Phosphorylates p53/TP53 and promotes p53/TP53-dependent apoptosis in response to DNA damage. Involved in the phase resetting of the cerebral cortex circadian clock during temporally restricted feeding. Stabilizes the core clock component BMAL1 by interfering with its ubiquitination, thus suppressing its degradation, resulting in phase resetting of the cerebral cortex clock. Phosphorylates and activates LRRK1, which phosphorylates RAB proteins involved in intracellular trafficking (By similarity).</text>
</comment>
<comment type="catalytic activity">
    <reaction evidence="2">
        <text>L-seryl-[protein] + ATP = O-phospho-L-seryl-[protein] + ADP + H(+)</text>
        <dbReference type="Rhea" id="RHEA:17989"/>
        <dbReference type="Rhea" id="RHEA-COMP:9863"/>
        <dbReference type="Rhea" id="RHEA-COMP:11604"/>
        <dbReference type="ChEBI" id="CHEBI:15378"/>
        <dbReference type="ChEBI" id="CHEBI:29999"/>
        <dbReference type="ChEBI" id="CHEBI:30616"/>
        <dbReference type="ChEBI" id="CHEBI:83421"/>
        <dbReference type="ChEBI" id="CHEBI:456216"/>
        <dbReference type="EC" id="2.7.11.13"/>
    </reaction>
</comment>
<comment type="catalytic activity">
    <reaction evidence="2">
        <text>L-threonyl-[protein] + ATP = O-phospho-L-threonyl-[protein] + ADP + H(+)</text>
        <dbReference type="Rhea" id="RHEA:46608"/>
        <dbReference type="Rhea" id="RHEA-COMP:11060"/>
        <dbReference type="Rhea" id="RHEA-COMP:11605"/>
        <dbReference type="ChEBI" id="CHEBI:15378"/>
        <dbReference type="ChEBI" id="CHEBI:30013"/>
        <dbReference type="ChEBI" id="CHEBI:30616"/>
        <dbReference type="ChEBI" id="CHEBI:61977"/>
        <dbReference type="ChEBI" id="CHEBI:456216"/>
        <dbReference type="EC" id="2.7.11.13"/>
    </reaction>
</comment>
<comment type="cofactor">
    <cofactor evidence="6">
        <name>Ca(2+)</name>
        <dbReference type="ChEBI" id="CHEBI:29108"/>
    </cofactor>
    <text evidence="2">Binds 3 Ca(2+) ions per subunit. The ions are bound to the C2 domain.</text>
</comment>
<comment type="activity regulation">
    <text>Classical (or conventional) PKCs (PRKCA, PRKCB and PRKCG) are activated by calcium and diacylglycerol (DAG) in the presence of phosphatidylserine. Three specific sites; Thr-514 (activation loop of the kinase domain), Thr-655 (turn motif) and Thr-674 (hydrophobic region), need to be phosphorylated for its full activation.</text>
</comment>
<comment type="subunit">
    <text evidence="2 3 4">Interacts with CDCP1 and GRIA4. Interacts with TP53INP1 and p53/TP53. Interacts with BMAL1.</text>
</comment>
<comment type="subcellular location">
    <subcellularLocation>
        <location evidence="3">Cytoplasm</location>
    </subcellularLocation>
    <subcellularLocation>
        <location evidence="1">Cytoplasm</location>
        <location evidence="1">Perinuclear region</location>
    </subcellularLocation>
    <subcellularLocation>
        <location evidence="3">Cell membrane</location>
        <topology evidence="1">Peripheral membrane protein</topology>
    </subcellularLocation>
    <subcellularLocation>
        <location evidence="3">Synapse</location>
        <location evidence="3">Synaptosome</location>
    </subcellularLocation>
    <subcellularLocation>
        <location evidence="4">Cell projection</location>
        <location evidence="4">Dendrite</location>
    </subcellularLocation>
    <text evidence="3">Translocates to synaptic membranes on stimulation.</text>
</comment>
<comment type="tissue specificity">
    <text evidence="12">Expressed specifically in brain.</text>
</comment>
<comment type="induction">
    <text evidence="11">Activated by hydrogen peroxide.</text>
</comment>
<comment type="PTM">
    <text evidence="3">Autophosphorylation on Thr-674 appears to regulate motor functions of junctophilins, JPH3 and JPH4.</text>
</comment>
<comment type="PTM">
    <text evidence="2">Ubiquitinated.</text>
</comment>
<comment type="similarity">
    <text evidence="13">Belongs to the protein kinase superfamily. AGC Ser/Thr protein kinase family. PKC subfamily.</text>
</comment>
<name>KPCG_RABIT</name>
<accession>P10829</accession>
<dbReference type="EC" id="2.7.11.13" evidence="2"/>
<dbReference type="EMBL" id="M19338">
    <property type="protein sequence ID" value="AAA31449.1"/>
    <property type="molecule type" value="mRNA"/>
</dbReference>
<dbReference type="PIR" id="A28708">
    <property type="entry name" value="KIRBGC"/>
</dbReference>
<dbReference type="RefSeq" id="NP_001075742.1">
    <property type="nucleotide sequence ID" value="NM_001082273.1"/>
</dbReference>
<dbReference type="SMR" id="P10829"/>
<dbReference type="BioGRID" id="1172125">
    <property type="interactions" value="1"/>
</dbReference>
<dbReference type="FunCoup" id="P10829">
    <property type="interactions" value="199"/>
</dbReference>
<dbReference type="MINT" id="P10829"/>
<dbReference type="STRING" id="9986.ENSOCUP00000023280"/>
<dbReference type="PaxDb" id="9986-ENSOCUP00000023280"/>
<dbReference type="GeneID" id="100009102"/>
<dbReference type="KEGG" id="ocu:100009102"/>
<dbReference type="CTD" id="5582"/>
<dbReference type="eggNOG" id="KOG0696">
    <property type="taxonomic scope" value="Eukaryota"/>
</dbReference>
<dbReference type="InParanoid" id="P10829"/>
<dbReference type="OrthoDB" id="63267at2759"/>
<dbReference type="BRENDA" id="2.7.11.13">
    <property type="organism ID" value="1749"/>
</dbReference>
<dbReference type="Proteomes" id="UP000001811">
    <property type="component" value="Unplaced"/>
</dbReference>
<dbReference type="GO" id="GO:0005829">
    <property type="term" value="C:cytosol"/>
    <property type="evidence" value="ECO:0000250"/>
    <property type="project" value="UniProtKB"/>
</dbReference>
<dbReference type="GO" id="GO:0030425">
    <property type="term" value="C:dendrite"/>
    <property type="evidence" value="ECO:0000250"/>
    <property type="project" value="UniProtKB"/>
</dbReference>
<dbReference type="GO" id="GO:0048471">
    <property type="term" value="C:perinuclear region of cytoplasm"/>
    <property type="evidence" value="ECO:0000250"/>
    <property type="project" value="UniProtKB"/>
</dbReference>
<dbReference type="GO" id="GO:0005886">
    <property type="term" value="C:plasma membrane"/>
    <property type="evidence" value="ECO:0000250"/>
    <property type="project" value="UniProtKB"/>
</dbReference>
<dbReference type="GO" id="GO:0045202">
    <property type="term" value="C:synapse"/>
    <property type="evidence" value="ECO:0007669"/>
    <property type="project" value="UniProtKB-SubCell"/>
</dbReference>
<dbReference type="GO" id="GO:0005524">
    <property type="term" value="F:ATP binding"/>
    <property type="evidence" value="ECO:0007669"/>
    <property type="project" value="UniProtKB-KW"/>
</dbReference>
<dbReference type="GO" id="GO:0004697">
    <property type="term" value="F:diacylglycerol-dependent serine/threonine kinase activity"/>
    <property type="evidence" value="ECO:0007669"/>
    <property type="project" value="UniProtKB-EC"/>
</dbReference>
<dbReference type="GO" id="GO:0106310">
    <property type="term" value="F:protein serine kinase activity"/>
    <property type="evidence" value="ECO:0007669"/>
    <property type="project" value="RHEA"/>
</dbReference>
<dbReference type="GO" id="GO:0008270">
    <property type="term" value="F:zinc ion binding"/>
    <property type="evidence" value="ECO:0007669"/>
    <property type="project" value="UniProtKB-KW"/>
</dbReference>
<dbReference type="GO" id="GO:0043524">
    <property type="term" value="P:negative regulation of neuron apoptotic process"/>
    <property type="evidence" value="ECO:0000250"/>
    <property type="project" value="UniProtKB"/>
</dbReference>
<dbReference type="GO" id="GO:1901799">
    <property type="term" value="P:negative regulation of proteasomal protein catabolic process"/>
    <property type="evidence" value="ECO:0000250"/>
    <property type="project" value="UniProtKB"/>
</dbReference>
<dbReference type="GO" id="GO:0031397">
    <property type="term" value="P:negative regulation of protein ubiquitination"/>
    <property type="evidence" value="ECO:0000250"/>
    <property type="project" value="UniProtKB"/>
</dbReference>
<dbReference type="GO" id="GO:0042752">
    <property type="term" value="P:regulation of circadian rhythm"/>
    <property type="evidence" value="ECO:0000250"/>
    <property type="project" value="UniProtKB"/>
</dbReference>
<dbReference type="GO" id="GO:0032095">
    <property type="term" value="P:regulation of response to food"/>
    <property type="evidence" value="ECO:0000250"/>
    <property type="project" value="UniProtKB"/>
</dbReference>
<dbReference type="GO" id="GO:0043278">
    <property type="term" value="P:response to morphine"/>
    <property type="evidence" value="ECO:0000250"/>
    <property type="project" value="UniProtKB"/>
</dbReference>
<dbReference type="GO" id="GO:0048265">
    <property type="term" value="P:response to pain"/>
    <property type="evidence" value="ECO:0000250"/>
    <property type="project" value="UniProtKB"/>
</dbReference>
<dbReference type="GO" id="GO:0048511">
    <property type="term" value="P:rhythmic process"/>
    <property type="evidence" value="ECO:0007669"/>
    <property type="project" value="UniProtKB-KW"/>
</dbReference>
<dbReference type="CDD" id="cd20833">
    <property type="entry name" value="C1_cPKC_rpt1"/>
    <property type="match status" value="1"/>
</dbReference>
<dbReference type="CDD" id="cd20836">
    <property type="entry name" value="C1_cPKC_rpt2"/>
    <property type="match status" value="1"/>
</dbReference>
<dbReference type="CDD" id="cd04026">
    <property type="entry name" value="C2_PKC_alpha_gamma"/>
    <property type="match status" value="1"/>
</dbReference>
<dbReference type="CDD" id="cd05587">
    <property type="entry name" value="STKc_cPKC"/>
    <property type="match status" value="1"/>
</dbReference>
<dbReference type="FunFam" id="2.60.40.150:FF:000012">
    <property type="entry name" value="Kinase C alpha type"/>
    <property type="match status" value="1"/>
</dbReference>
<dbReference type="FunFam" id="1.10.510.10:FF:000023">
    <property type="entry name" value="Protein kinase C"/>
    <property type="match status" value="1"/>
</dbReference>
<dbReference type="FunFam" id="3.30.200.20:FF:000080">
    <property type="entry name" value="Protein kinase C"/>
    <property type="match status" value="1"/>
</dbReference>
<dbReference type="FunFam" id="3.30.200.20:FF:000103">
    <property type="entry name" value="Protein kinase C"/>
    <property type="match status" value="1"/>
</dbReference>
<dbReference type="FunFam" id="3.30.60.20:FF:000006">
    <property type="entry name" value="Protein kinase C"/>
    <property type="match status" value="1"/>
</dbReference>
<dbReference type="FunFam" id="3.30.60.20:FF:000011">
    <property type="entry name" value="Protein kinase C"/>
    <property type="match status" value="1"/>
</dbReference>
<dbReference type="Gene3D" id="3.30.60.20">
    <property type="match status" value="2"/>
</dbReference>
<dbReference type="Gene3D" id="2.60.40.150">
    <property type="entry name" value="C2 domain"/>
    <property type="match status" value="1"/>
</dbReference>
<dbReference type="Gene3D" id="3.30.200.20">
    <property type="entry name" value="Phosphorylase Kinase, domain 1"/>
    <property type="match status" value="2"/>
</dbReference>
<dbReference type="Gene3D" id="1.10.510.10">
    <property type="entry name" value="Transferase(Phosphotransferase) domain 1"/>
    <property type="match status" value="1"/>
</dbReference>
<dbReference type="InterPro" id="IPR000961">
    <property type="entry name" value="AGC-kinase_C"/>
</dbReference>
<dbReference type="InterPro" id="IPR046349">
    <property type="entry name" value="C1-like_sf"/>
</dbReference>
<dbReference type="InterPro" id="IPR000008">
    <property type="entry name" value="C2_dom"/>
</dbReference>
<dbReference type="InterPro" id="IPR035892">
    <property type="entry name" value="C2_domain_sf"/>
</dbReference>
<dbReference type="InterPro" id="IPR020454">
    <property type="entry name" value="DAG/PE-bd"/>
</dbReference>
<dbReference type="InterPro" id="IPR011009">
    <property type="entry name" value="Kinase-like_dom_sf"/>
</dbReference>
<dbReference type="InterPro" id="IPR002219">
    <property type="entry name" value="PE/DAG-bd"/>
</dbReference>
<dbReference type="InterPro" id="IPR017892">
    <property type="entry name" value="Pkinase_C"/>
</dbReference>
<dbReference type="InterPro" id="IPR000719">
    <property type="entry name" value="Prot_kinase_dom"/>
</dbReference>
<dbReference type="InterPro" id="IPR017441">
    <property type="entry name" value="Protein_kinase_ATP_BS"/>
</dbReference>
<dbReference type="InterPro" id="IPR014375">
    <property type="entry name" value="Protein_kinase_C_a/b/g"/>
</dbReference>
<dbReference type="InterPro" id="IPR008271">
    <property type="entry name" value="Ser/Thr_kinase_AS"/>
</dbReference>
<dbReference type="PANTHER" id="PTHR24351">
    <property type="entry name" value="RIBOSOMAL PROTEIN S6 KINASE"/>
    <property type="match status" value="1"/>
</dbReference>
<dbReference type="Pfam" id="PF00130">
    <property type="entry name" value="C1_1"/>
    <property type="match status" value="2"/>
</dbReference>
<dbReference type="Pfam" id="PF00168">
    <property type="entry name" value="C2"/>
    <property type="match status" value="1"/>
</dbReference>
<dbReference type="Pfam" id="PF00069">
    <property type="entry name" value="Pkinase"/>
    <property type="match status" value="1"/>
</dbReference>
<dbReference type="Pfam" id="PF00433">
    <property type="entry name" value="Pkinase_C"/>
    <property type="match status" value="1"/>
</dbReference>
<dbReference type="PIRSF" id="PIRSF000550">
    <property type="entry name" value="PKC_alpha"/>
    <property type="match status" value="1"/>
</dbReference>
<dbReference type="PRINTS" id="PR00360">
    <property type="entry name" value="C2DOMAIN"/>
</dbReference>
<dbReference type="PRINTS" id="PR00008">
    <property type="entry name" value="DAGPEDOMAIN"/>
</dbReference>
<dbReference type="SMART" id="SM00109">
    <property type="entry name" value="C1"/>
    <property type="match status" value="2"/>
</dbReference>
<dbReference type="SMART" id="SM00239">
    <property type="entry name" value="C2"/>
    <property type="match status" value="1"/>
</dbReference>
<dbReference type="SMART" id="SM00133">
    <property type="entry name" value="S_TK_X"/>
    <property type="match status" value="1"/>
</dbReference>
<dbReference type="SMART" id="SM00220">
    <property type="entry name" value="S_TKc"/>
    <property type="match status" value="1"/>
</dbReference>
<dbReference type="SUPFAM" id="SSF49562">
    <property type="entry name" value="C2 domain (Calcium/lipid-binding domain, CaLB)"/>
    <property type="match status" value="1"/>
</dbReference>
<dbReference type="SUPFAM" id="SSF57889">
    <property type="entry name" value="Cysteine-rich domain"/>
    <property type="match status" value="2"/>
</dbReference>
<dbReference type="SUPFAM" id="SSF56112">
    <property type="entry name" value="Protein kinase-like (PK-like)"/>
    <property type="match status" value="1"/>
</dbReference>
<dbReference type="PROSITE" id="PS51285">
    <property type="entry name" value="AGC_KINASE_CTER"/>
    <property type="match status" value="1"/>
</dbReference>
<dbReference type="PROSITE" id="PS50004">
    <property type="entry name" value="C2"/>
    <property type="match status" value="1"/>
</dbReference>
<dbReference type="PROSITE" id="PS00107">
    <property type="entry name" value="PROTEIN_KINASE_ATP"/>
    <property type="match status" value="1"/>
</dbReference>
<dbReference type="PROSITE" id="PS50011">
    <property type="entry name" value="PROTEIN_KINASE_DOM"/>
    <property type="match status" value="1"/>
</dbReference>
<dbReference type="PROSITE" id="PS00108">
    <property type="entry name" value="PROTEIN_KINASE_ST"/>
    <property type="match status" value="1"/>
</dbReference>
<dbReference type="PROSITE" id="PS00479">
    <property type="entry name" value="ZF_DAG_PE_1"/>
    <property type="match status" value="2"/>
</dbReference>
<dbReference type="PROSITE" id="PS50081">
    <property type="entry name" value="ZF_DAG_PE_2"/>
    <property type="match status" value="2"/>
</dbReference>
<organism>
    <name type="scientific">Oryctolagus cuniculus</name>
    <name type="common">Rabbit</name>
    <dbReference type="NCBI Taxonomy" id="9986"/>
    <lineage>
        <taxon>Eukaryota</taxon>
        <taxon>Metazoa</taxon>
        <taxon>Chordata</taxon>
        <taxon>Craniata</taxon>
        <taxon>Vertebrata</taxon>
        <taxon>Euteleostomi</taxon>
        <taxon>Mammalia</taxon>
        <taxon>Eutheria</taxon>
        <taxon>Euarchontoglires</taxon>
        <taxon>Glires</taxon>
        <taxon>Lagomorpha</taxon>
        <taxon>Leporidae</taxon>
        <taxon>Oryctolagus</taxon>
    </lineage>
</organism>
<sequence>MAGLGPGGGDSEGGPRPLFCRKGALRQKVVHEVKSHKFTARFFKQPTFCSHCTDFIWGIGKQGLQCQVCSFVVHRRCHEFVTFECPGAGKGPQTDDPRNKHKFRLHSYSSPTFCDHCGSLLYGLVHQGMKCSCCEMNVHRRCVRTVPSLCGVDHTERRGRLQLEIRAPTSDEIHVTVGEARNLIPMDPNGLSDPYVKLKLIPDPRNLTKQKTRTVKATLNPVWNETFVFNLKPGDVERRLSVEVWDWDRTSRNDFMGAMSFGVSELLKAPVDGWYKLLNQEEGEYYNVPVADADNCSLLQKFEACNYPLELYERVRMGPSSSPIPSPSPSPTDSKRCFFGASPGRLHISDFSFLMVLGKGSFGKVMLAERRGSDELYAIKILKKDVIVQDDDVDCTLVEKRVLALGGRGPGGRPHFLTQLHSTFQTPDRLYFVMEYVTGGDLMYHIQQLGKFKEPHAAFYAAEIAIGLFFLHNQGIIYRDLKLDNVMLDAEGHIKITDFGMCKENVFPGTTTRTFCGTPDYIAPEIIAYQPYGKSVDWWSFGVLLYEMLAGQPPFDGEDEEELFQAIMEQTVTYPKSLSREAVAICKGFLTKHPGKRLGSGPDGEPTIRAHGFFRWIDWERLERLEIAPPFRPRPCGRSGENFDKFFTRAAPAVTPPDRLVLASIDQADFQGFTYVNPDFVHPDARSPSSPVPVPVM</sequence>
<reference key="1">
    <citation type="journal article" date="1988" name="Biochemistry">
        <title>A fourth type of rabbit protein kinase C.</title>
        <authorList>
            <person name="Ohno S."/>
            <person name="Kawasaki H."/>
            <person name="Konno Y."/>
            <person name="Inagaki M."/>
            <person name="Hidaka H."/>
            <person name="Suzuki K."/>
        </authorList>
    </citation>
    <scope>NUCLEOTIDE SEQUENCE [MRNA]</scope>
    <scope>TISSUE SPECIFICITY</scope>
</reference>
<reference key="2">
    <citation type="journal article" date="2005" name="J. Biol. Chem.">
        <title>Oxidative activation of protein kinase Cgamma through the C1 domain. Effects on gap junctions.</title>
        <authorList>
            <person name="Lin D."/>
            <person name="Takemoto D.J."/>
        </authorList>
    </citation>
    <scope>FUNCTION IN PHOSPHORYLATION OF GJA1/CX43</scope>
    <scope>INDUCTION BY HYDROGEN PEROXIDE</scope>
</reference>
<protein>
    <recommendedName>
        <fullName>Protein kinase C gamma type</fullName>
        <shortName>PKC-gamma</shortName>
        <ecNumber evidence="2">2.7.11.13</ecNumber>
    </recommendedName>
    <alternativeName>
        <fullName>PKC-delta</fullName>
    </alternativeName>
</protein>
<gene>
    <name type="primary">PRKCG</name>
</gene>
<proteinExistence type="evidence at protein level"/>
<evidence type="ECO:0000250" key="1"/>
<evidence type="ECO:0000250" key="2">
    <source>
        <dbReference type="UniProtKB" id="P05129"/>
    </source>
</evidence>
<evidence type="ECO:0000250" key="3">
    <source>
        <dbReference type="UniProtKB" id="P63318"/>
    </source>
</evidence>
<evidence type="ECO:0000250" key="4">
    <source>
        <dbReference type="UniProtKB" id="P63319"/>
    </source>
</evidence>
<evidence type="ECO:0000255" key="5"/>
<evidence type="ECO:0000255" key="6">
    <source>
        <dbReference type="PROSITE-ProRule" id="PRU00041"/>
    </source>
</evidence>
<evidence type="ECO:0000255" key="7">
    <source>
        <dbReference type="PROSITE-ProRule" id="PRU00159"/>
    </source>
</evidence>
<evidence type="ECO:0000255" key="8">
    <source>
        <dbReference type="PROSITE-ProRule" id="PRU00226"/>
    </source>
</evidence>
<evidence type="ECO:0000255" key="9">
    <source>
        <dbReference type="PROSITE-ProRule" id="PRU00618"/>
    </source>
</evidence>
<evidence type="ECO:0000255" key="10">
    <source>
        <dbReference type="PROSITE-ProRule" id="PRU10027"/>
    </source>
</evidence>
<evidence type="ECO:0000269" key="11">
    <source>
    </source>
</evidence>
<evidence type="ECO:0000269" key="12">
    <source>
    </source>
</evidence>
<evidence type="ECO:0000305" key="13"/>